<gene>
    <name evidence="1" type="primary">queF</name>
    <name type="ordered locus">SUN_0139</name>
</gene>
<proteinExistence type="inferred from homology"/>
<comment type="function">
    <text evidence="1">Catalyzes the NADPH-dependent reduction of 7-cyano-7-deazaguanine (preQ0) to 7-aminomethyl-7-deazaguanine (preQ1).</text>
</comment>
<comment type="catalytic activity">
    <reaction evidence="1">
        <text>7-aminomethyl-7-carbaguanine + 2 NADP(+) = 7-cyano-7-deazaguanine + 2 NADPH + 3 H(+)</text>
        <dbReference type="Rhea" id="RHEA:13409"/>
        <dbReference type="ChEBI" id="CHEBI:15378"/>
        <dbReference type="ChEBI" id="CHEBI:45075"/>
        <dbReference type="ChEBI" id="CHEBI:57783"/>
        <dbReference type="ChEBI" id="CHEBI:58349"/>
        <dbReference type="ChEBI" id="CHEBI:58703"/>
        <dbReference type="EC" id="1.7.1.13"/>
    </reaction>
</comment>
<comment type="pathway">
    <text evidence="1">tRNA modification; tRNA-queuosine biosynthesis.</text>
</comment>
<comment type="subcellular location">
    <subcellularLocation>
        <location evidence="1">Cytoplasm</location>
    </subcellularLocation>
</comment>
<comment type="similarity">
    <text evidence="1">Belongs to the GTP cyclohydrolase I family. QueF type 1 subfamily.</text>
</comment>
<sequence length="125" mass="14760">MKYGEKEIQEFDINAEENFWPNEHEKNYTINIELPEFMCLCPRSGYPDFAIMKLSYVPDKKVIELKALKLYINSFMYRHISHENSANEIFDALYSQLEPKSMKLIADFNPRGNVHTVIEIDSETF</sequence>
<feature type="chain" id="PRO_1000062413" description="NADPH-dependent 7-cyano-7-deazaguanine reductase">
    <location>
        <begin position="1"/>
        <end position="125"/>
    </location>
</feature>
<feature type="active site" description="Thioimide intermediate" evidence="1">
    <location>
        <position position="41"/>
    </location>
</feature>
<feature type="active site" description="Proton donor" evidence="1">
    <location>
        <position position="48"/>
    </location>
</feature>
<feature type="binding site" evidence="1">
    <location>
        <begin position="63"/>
        <end position="65"/>
    </location>
    <ligand>
        <name>substrate</name>
    </ligand>
</feature>
<feature type="binding site" evidence="1">
    <location>
        <begin position="82"/>
        <end position="83"/>
    </location>
    <ligand>
        <name>substrate</name>
    </ligand>
</feature>
<reference key="1">
    <citation type="journal article" date="2007" name="Proc. Natl. Acad. Sci. U.S.A.">
        <title>Deep-sea vent epsilon-proteobacterial genomes provide insights into emergence of pathogens.</title>
        <authorList>
            <person name="Nakagawa S."/>
            <person name="Takaki Y."/>
            <person name="Shimamura S."/>
            <person name="Reysenbach A.-L."/>
            <person name="Takai K."/>
            <person name="Horikoshi K."/>
        </authorList>
    </citation>
    <scope>NUCLEOTIDE SEQUENCE [LARGE SCALE GENOMIC DNA]</scope>
    <source>
        <strain>NBC37-1</strain>
    </source>
</reference>
<organism>
    <name type="scientific">Sulfurovum sp. (strain NBC37-1)</name>
    <dbReference type="NCBI Taxonomy" id="387093"/>
    <lineage>
        <taxon>Bacteria</taxon>
        <taxon>Pseudomonadati</taxon>
        <taxon>Campylobacterota</taxon>
        <taxon>Epsilonproteobacteria</taxon>
        <taxon>Campylobacterales</taxon>
        <taxon>Sulfurovaceae</taxon>
        <taxon>Sulfurovum</taxon>
    </lineage>
</organism>
<accession>A6Q6J0</accession>
<dbReference type="EC" id="1.7.1.13" evidence="1"/>
<dbReference type="EMBL" id="AP009179">
    <property type="protein sequence ID" value="BAF71099.1"/>
    <property type="molecule type" value="Genomic_DNA"/>
</dbReference>
<dbReference type="RefSeq" id="WP_011979832.1">
    <property type="nucleotide sequence ID" value="NC_009663.1"/>
</dbReference>
<dbReference type="SMR" id="A6Q6J0"/>
<dbReference type="STRING" id="387093.SUN_0139"/>
<dbReference type="KEGG" id="sun:SUN_0139"/>
<dbReference type="eggNOG" id="COG0780">
    <property type="taxonomic scope" value="Bacteria"/>
</dbReference>
<dbReference type="HOGENOM" id="CLU_102489_1_1_7"/>
<dbReference type="OrthoDB" id="9789995at2"/>
<dbReference type="UniPathway" id="UPA00392"/>
<dbReference type="Proteomes" id="UP000006378">
    <property type="component" value="Chromosome"/>
</dbReference>
<dbReference type="GO" id="GO:0005737">
    <property type="term" value="C:cytoplasm"/>
    <property type="evidence" value="ECO:0007669"/>
    <property type="project" value="UniProtKB-SubCell"/>
</dbReference>
<dbReference type="GO" id="GO:0033739">
    <property type="term" value="F:preQ1 synthase activity"/>
    <property type="evidence" value="ECO:0007669"/>
    <property type="project" value="UniProtKB-UniRule"/>
</dbReference>
<dbReference type="GO" id="GO:0008616">
    <property type="term" value="P:queuosine biosynthetic process"/>
    <property type="evidence" value="ECO:0007669"/>
    <property type="project" value="UniProtKB-UniRule"/>
</dbReference>
<dbReference type="GO" id="GO:0006400">
    <property type="term" value="P:tRNA modification"/>
    <property type="evidence" value="ECO:0007669"/>
    <property type="project" value="UniProtKB-UniRule"/>
</dbReference>
<dbReference type="Gene3D" id="3.30.1130.10">
    <property type="match status" value="1"/>
</dbReference>
<dbReference type="HAMAP" id="MF_00818">
    <property type="entry name" value="QueF_type1"/>
    <property type="match status" value="1"/>
</dbReference>
<dbReference type="InterPro" id="IPR043133">
    <property type="entry name" value="GTP-CH-I_C/QueF"/>
</dbReference>
<dbReference type="InterPro" id="IPR050084">
    <property type="entry name" value="NADPH_dep_7-cyano-7-deazaG_red"/>
</dbReference>
<dbReference type="InterPro" id="IPR029500">
    <property type="entry name" value="QueF"/>
</dbReference>
<dbReference type="InterPro" id="IPR016856">
    <property type="entry name" value="QueF_type1"/>
</dbReference>
<dbReference type="NCBIfam" id="TIGR03139">
    <property type="entry name" value="QueF-II"/>
    <property type="match status" value="1"/>
</dbReference>
<dbReference type="PANTHER" id="PTHR34354">
    <property type="entry name" value="NADPH-DEPENDENT 7-CYANO-7-DEAZAGUANINE REDUCTASE"/>
    <property type="match status" value="1"/>
</dbReference>
<dbReference type="PANTHER" id="PTHR34354:SF1">
    <property type="entry name" value="NADPH-DEPENDENT 7-CYANO-7-DEAZAGUANINE REDUCTASE"/>
    <property type="match status" value="1"/>
</dbReference>
<dbReference type="Pfam" id="PF14489">
    <property type="entry name" value="QueF"/>
    <property type="match status" value="1"/>
</dbReference>
<dbReference type="PIRSF" id="PIRSF027377">
    <property type="entry name" value="Nitrile_oxidored_QueF"/>
    <property type="match status" value="1"/>
</dbReference>
<dbReference type="SUPFAM" id="SSF55620">
    <property type="entry name" value="Tetrahydrobiopterin biosynthesis enzymes-like"/>
    <property type="match status" value="1"/>
</dbReference>
<name>QUEF_SULNB</name>
<evidence type="ECO:0000255" key="1">
    <source>
        <dbReference type="HAMAP-Rule" id="MF_00818"/>
    </source>
</evidence>
<keyword id="KW-0963">Cytoplasm</keyword>
<keyword id="KW-0521">NADP</keyword>
<keyword id="KW-0560">Oxidoreductase</keyword>
<keyword id="KW-0671">Queuosine biosynthesis</keyword>
<protein>
    <recommendedName>
        <fullName evidence="1">NADPH-dependent 7-cyano-7-deazaguanine reductase</fullName>
        <ecNumber evidence="1">1.7.1.13</ecNumber>
    </recommendedName>
    <alternativeName>
        <fullName evidence="1">7-cyano-7-carbaguanine reductase</fullName>
    </alternativeName>
    <alternativeName>
        <fullName evidence="1">NADPH-dependent nitrile oxidoreductase</fullName>
    </alternativeName>
    <alternativeName>
        <fullName evidence="1">PreQ(0) reductase</fullName>
    </alternativeName>
</protein>